<accession>Q02G09</accession>
<organism>
    <name type="scientific">Pseudomonas aeruginosa (strain UCBPP-PA14)</name>
    <dbReference type="NCBI Taxonomy" id="208963"/>
    <lineage>
        <taxon>Bacteria</taxon>
        <taxon>Pseudomonadati</taxon>
        <taxon>Pseudomonadota</taxon>
        <taxon>Gammaproteobacteria</taxon>
        <taxon>Pseudomonadales</taxon>
        <taxon>Pseudomonadaceae</taxon>
        <taxon>Pseudomonas</taxon>
    </lineage>
</organism>
<feature type="chain" id="PRO_1000004932" description="Peptide chain release factor 1">
    <location>
        <begin position="1"/>
        <end position="360"/>
    </location>
</feature>
<feature type="modified residue" description="N5-methylglutamine" evidence="1">
    <location>
        <position position="237"/>
    </location>
</feature>
<proteinExistence type="inferred from homology"/>
<gene>
    <name evidence="1" type="primary">prfA</name>
    <name type="ordered locus">PA14_61700</name>
</gene>
<reference key="1">
    <citation type="journal article" date="2006" name="Genome Biol.">
        <title>Genomic analysis reveals that Pseudomonas aeruginosa virulence is combinatorial.</title>
        <authorList>
            <person name="Lee D.G."/>
            <person name="Urbach J.M."/>
            <person name="Wu G."/>
            <person name="Liberati N.T."/>
            <person name="Feinbaum R.L."/>
            <person name="Miyata S."/>
            <person name="Diggins L.T."/>
            <person name="He J."/>
            <person name="Saucier M."/>
            <person name="Deziel E."/>
            <person name="Friedman L."/>
            <person name="Li L."/>
            <person name="Grills G."/>
            <person name="Montgomery K."/>
            <person name="Kucherlapati R."/>
            <person name="Rahme L.G."/>
            <person name="Ausubel F.M."/>
        </authorList>
    </citation>
    <scope>NUCLEOTIDE SEQUENCE [LARGE SCALE GENOMIC DNA]</scope>
    <source>
        <strain>UCBPP-PA14</strain>
    </source>
</reference>
<dbReference type="EMBL" id="CP000438">
    <property type="protein sequence ID" value="ABJ14046.1"/>
    <property type="molecule type" value="Genomic_DNA"/>
</dbReference>
<dbReference type="RefSeq" id="WP_003099290.1">
    <property type="nucleotide sequence ID" value="NZ_CP034244.1"/>
</dbReference>
<dbReference type="SMR" id="Q02G09"/>
<dbReference type="KEGG" id="pau:PA14_61700"/>
<dbReference type="PseudoCAP" id="PA14_61700"/>
<dbReference type="HOGENOM" id="CLU_036856_0_1_6"/>
<dbReference type="BioCyc" id="PAER208963:G1G74-5216-MONOMER"/>
<dbReference type="Proteomes" id="UP000000653">
    <property type="component" value="Chromosome"/>
</dbReference>
<dbReference type="GO" id="GO:0005737">
    <property type="term" value="C:cytoplasm"/>
    <property type="evidence" value="ECO:0007669"/>
    <property type="project" value="UniProtKB-SubCell"/>
</dbReference>
<dbReference type="GO" id="GO:0016149">
    <property type="term" value="F:translation release factor activity, codon specific"/>
    <property type="evidence" value="ECO:0007669"/>
    <property type="project" value="UniProtKB-UniRule"/>
</dbReference>
<dbReference type="FunFam" id="3.30.160.20:FF:000004">
    <property type="entry name" value="Peptide chain release factor 1"/>
    <property type="match status" value="1"/>
</dbReference>
<dbReference type="FunFam" id="3.30.70.1660:FF:000002">
    <property type="entry name" value="Peptide chain release factor 1"/>
    <property type="match status" value="1"/>
</dbReference>
<dbReference type="FunFam" id="3.30.70.1660:FF:000004">
    <property type="entry name" value="Peptide chain release factor 1"/>
    <property type="match status" value="1"/>
</dbReference>
<dbReference type="Gene3D" id="3.30.160.20">
    <property type="match status" value="1"/>
</dbReference>
<dbReference type="Gene3D" id="3.30.70.1660">
    <property type="match status" value="1"/>
</dbReference>
<dbReference type="Gene3D" id="6.10.140.1950">
    <property type="match status" value="1"/>
</dbReference>
<dbReference type="HAMAP" id="MF_00093">
    <property type="entry name" value="Rel_fac_1"/>
    <property type="match status" value="1"/>
</dbReference>
<dbReference type="InterPro" id="IPR005139">
    <property type="entry name" value="PCRF"/>
</dbReference>
<dbReference type="InterPro" id="IPR000352">
    <property type="entry name" value="Pep_chain_release_fac_I"/>
</dbReference>
<dbReference type="InterPro" id="IPR045853">
    <property type="entry name" value="Pep_chain_release_fac_I_sf"/>
</dbReference>
<dbReference type="InterPro" id="IPR050057">
    <property type="entry name" value="Prokaryotic/Mito_RF"/>
</dbReference>
<dbReference type="InterPro" id="IPR004373">
    <property type="entry name" value="RF-1"/>
</dbReference>
<dbReference type="NCBIfam" id="TIGR00019">
    <property type="entry name" value="prfA"/>
    <property type="match status" value="1"/>
</dbReference>
<dbReference type="NCBIfam" id="NF001859">
    <property type="entry name" value="PRK00591.1"/>
    <property type="match status" value="1"/>
</dbReference>
<dbReference type="PANTHER" id="PTHR43804">
    <property type="entry name" value="LD18447P"/>
    <property type="match status" value="1"/>
</dbReference>
<dbReference type="PANTHER" id="PTHR43804:SF7">
    <property type="entry name" value="LD18447P"/>
    <property type="match status" value="1"/>
</dbReference>
<dbReference type="Pfam" id="PF03462">
    <property type="entry name" value="PCRF"/>
    <property type="match status" value="1"/>
</dbReference>
<dbReference type="Pfam" id="PF00472">
    <property type="entry name" value="RF-1"/>
    <property type="match status" value="1"/>
</dbReference>
<dbReference type="SMART" id="SM00937">
    <property type="entry name" value="PCRF"/>
    <property type="match status" value="1"/>
</dbReference>
<dbReference type="SUPFAM" id="SSF75620">
    <property type="entry name" value="Release factor"/>
    <property type="match status" value="1"/>
</dbReference>
<dbReference type="PROSITE" id="PS00745">
    <property type="entry name" value="RF_PROK_I"/>
    <property type="match status" value="1"/>
</dbReference>
<protein>
    <recommendedName>
        <fullName evidence="1">Peptide chain release factor 1</fullName>
        <shortName evidence="1">RF-1</shortName>
    </recommendedName>
</protein>
<comment type="function">
    <text evidence="1">Peptide chain release factor 1 directs the termination of translation in response to the peptide chain termination codons UAG and UAA.</text>
</comment>
<comment type="subcellular location">
    <subcellularLocation>
        <location evidence="1">Cytoplasm</location>
    </subcellularLocation>
</comment>
<comment type="PTM">
    <text evidence="1">Methylated by PrmC. Methylation increases the termination efficiency of RF1.</text>
</comment>
<comment type="similarity">
    <text evidence="1">Belongs to the prokaryotic/mitochondrial release factor family.</text>
</comment>
<name>RF1_PSEAB</name>
<evidence type="ECO:0000255" key="1">
    <source>
        <dbReference type="HAMAP-Rule" id="MF_00093"/>
    </source>
</evidence>
<sequence>MKASLLKKLDVLSDRYEELTALLGDAEVISDQTRFRAYSREYAEVEPVILAFRDYRKVQADLEGAQALLKDSDPELRDLAEEEVAEARGRLAALGDSLQRMLLPKDPNDSRNVFLEIRAGTGGDEAAIFSGDLFRMYSRYAERQGWRVETLSENEGEHGGYKEVIARVEGDNVYAKLKFESGAHRVQRVPETESQGRIHTSACTVAVLPEPDEQAAIEINPADLRVDTYRSSGAGGQHVNKTDSAVRITHIPSGIVVECQEERSQHKNRAKAMAWLAAKLNDQQQAAAQQAIASTRKLLVGSGDRSERIRTYNFPQGRVTDHRINLTLYSLGEVMEGAVEQVIEPLLQEYQADQLAALGD</sequence>
<keyword id="KW-0963">Cytoplasm</keyword>
<keyword id="KW-0488">Methylation</keyword>
<keyword id="KW-0648">Protein biosynthesis</keyword>